<organism>
    <name type="scientific">Arabidopsis thaliana</name>
    <name type="common">Mouse-ear cress</name>
    <dbReference type="NCBI Taxonomy" id="3702"/>
    <lineage>
        <taxon>Eukaryota</taxon>
        <taxon>Viridiplantae</taxon>
        <taxon>Streptophyta</taxon>
        <taxon>Embryophyta</taxon>
        <taxon>Tracheophyta</taxon>
        <taxon>Spermatophyta</taxon>
        <taxon>Magnoliopsida</taxon>
        <taxon>eudicotyledons</taxon>
        <taxon>Gunneridae</taxon>
        <taxon>Pentapetalae</taxon>
        <taxon>rosids</taxon>
        <taxon>malvids</taxon>
        <taxon>Brassicales</taxon>
        <taxon>Brassicaceae</taxon>
        <taxon>Camelineae</taxon>
        <taxon>Arabidopsis</taxon>
    </lineage>
</organism>
<comment type="function">
    <text evidence="2">Catalyzes the specific attachment of an amino acid to its cognate tRNA in a 2 step reaction: the amino acid (AA) is first activated by ATP to form AA-AMP and then transferred to the acceptor end of the tRNA.</text>
</comment>
<comment type="catalytic activity">
    <reaction evidence="5">
        <text>tRNA(Asp) + L-aspartate + ATP = L-aspartyl-tRNA(Asp) + AMP + diphosphate</text>
        <dbReference type="Rhea" id="RHEA:19649"/>
        <dbReference type="Rhea" id="RHEA-COMP:9660"/>
        <dbReference type="Rhea" id="RHEA-COMP:9678"/>
        <dbReference type="ChEBI" id="CHEBI:29991"/>
        <dbReference type="ChEBI" id="CHEBI:30616"/>
        <dbReference type="ChEBI" id="CHEBI:33019"/>
        <dbReference type="ChEBI" id="CHEBI:78442"/>
        <dbReference type="ChEBI" id="CHEBI:78516"/>
        <dbReference type="ChEBI" id="CHEBI:456215"/>
        <dbReference type="EC" id="6.1.1.12"/>
    </reaction>
</comment>
<comment type="subcellular location">
    <subcellularLocation>
        <location evidence="4">Plastid</location>
        <location evidence="4">Chloroplast</location>
    </subcellularLocation>
    <subcellularLocation>
        <location evidence="4">Mitochondrion</location>
    </subcellularLocation>
</comment>
<comment type="similarity">
    <text evidence="5">Belongs to the class-II aminoacyl-tRNA synthetase family. Type 1 subfamily.</text>
</comment>
<comment type="sequence caution" evidence="5">
    <conflict type="frameshift">
        <sequence resource="EMBL-CDS" id="BAC43347"/>
    </conflict>
</comment>
<comment type="sequence caution" evidence="5">
    <conflict type="erroneous gene model prediction">
        <sequence resource="EMBL-CDS" id="CAA20589"/>
    </conflict>
</comment>
<comment type="sequence caution" evidence="5">
    <conflict type="erroneous gene model prediction">
        <sequence resource="EMBL-CDS" id="CAB80093"/>
    </conflict>
</comment>
<dbReference type="EC" id="6.1.1.12" evidence="5"/>
<dbReference type="EMBL" id="AL031394">
    <property type="protein sequence ID" value="CAA20589.1"/>
    <property type="status" value="ALT_SEQ"/>
    <property type="molecule type" value="Genomic_DNA"/>
</dbReference>
<dbReference type="EMBL" id="AL161584">
    <property type="protein sequence ID" value="CAB80093.1"/>
    <property type="status" value="ALT_SEQ"/>
    <property type="molecule type" value="Genomic_DNA"/>
</dbReference>
<dbReference type="EMBL" id="CP002687">
    <property type="protein sequence ID" value="AEE86274.1"/>
    <property type="molecule type" value="Genomic_DNA"/>
</dbReference>
<dbReference type="EMBL" id="AK118754">
    <property type="protein sequence ID" value="BAC43347.1"/>
    <property type="status" value="ALT_FRAME"/>
    <property type="molecule type" value="mRNA"/>
</dbReference>
<dbReference type="PIR" id="T04993">
    <property type="entry name" value="T04993"/>
</dbReference>
<dbReference type="RefSeq" id="NP_195102.2">
    <property type="nucleotide sequence ID" value="NM_119534.5"/>
</dbReference>
<dbReference type="SMR" id="F4JJT9"/>
<dbReference type="FunCoup" id="F4JJT9">
    <property type="interactions" value="3248"/>
</dbReference>
<dbReference type="STRING" id="3702.F4JJT9"/>
<dbReference type="iPTMnet" id="F4JJT9"/>
<dbReference type="PaxDb" id="3702-AT4G33760.1"/>
<dbReference type="ProteomicsDB" id="228464"/>
<dbReference type="EnsemblPlants" id="AT4G33760.1">
    <property type="protein sequence ID" value="AT4G33760.1"/>
    <property type="gene ID" value="AT4G33760"/>
</dbReference>
<dbReference type="GeneID" id="829518"/>
<dbReference type="Gramene" id="AT4G33760.1">
    <property type="protein sequence ID" value="AT4G33760.1"/>
    <property type="gene ID" value="AT4G33760"/>
</dbReference>
<dbReference type="KEGG" id="ath:AT4G33760"/>
<dbReference type="Araport" id="AT4G33760"/>
<dbReference type="TAIR" id="AT4G33760">
    <property type="gene designation" value="OKI1"/>
</dbReference>
<dbReference type="eggNOG" id="KOG2411">
    <property type="taxonomic scope" value="Eukaryota"/>
</dbReference>
<dbReference type="HOGENOM" id="CLU_014330_3_2_1"/>
<dbReference type="InParanoid" id="F4JJT9"/>
<dbReference type="OMA" id="LCGWVDR"/>
<dbReference type="PRO" id="PR:F4JJT9"/>
<dbReference type="Proteomes" id="UP000006548">
    <property type="component" value="Chromosome 4"/>
</dbReference>
<dbReference type="ExpressionAtlas" id="F4JJT9">
    <property type="expression patterns" value="baseline and differential"/>
</dbReference>
<dbReference type="GO" id="GO:0009507">
    <property type="term" value="C:chloroplast"/>
    <property type="evidence" value="ECO:0000314"/>
    <property type="project" value="TAIR"/>
</dbReference>
<dbReference type="GO" id="GO:0005829">
    <property type="term" value="C:cytosol"/>
    <property type="evidence" value="ECO:0007005"/>
    <property type="project" value="TAIR"/>
</dbReference>
<dbReference type="GO" id="GO:0005739">
    <property type="term" value="C:mitochondrion"/>
    <property type="evidence" value="ECO:0000314"/>
    <property type="project" value="TAIR"/>
</dbReference>
<dbReference type="GO" id="GO:0004815">
    <property type="term" value="F:aspartate-tRNA ligase activity"/>
    <property type="evidence" value="ECO:0007669"/>
    <property type="project" value="UniProtKB-EC"/>
</dbReference>
<dbReference type="GO" id="GO:0005524">
    <property type="term" value="F:ATP binding"/>
    <property type="evidence" value="ECO:0007669"/>
    <property type="project" value="UniProtKB-KW"/>
</dbReference>
<dbReference type="GO" id="GO:0003677">
    <property type="term" value="F:DNA binding"/>
    <property type="evidence" value="ECO:0007669"/>
    <property type="project" value="UniProtKB-KW"/>
</dbReference>
<dbReference type="GO" id="GO:0046872">
    <property type="term" value="F:metal ion binding"/>
    <property type="evidence" value="ECO:0007669"/>
    <property type="project" value="UniProtKB-KW"/>
</dbReference>
<dbReference type="GO" id="GO:0006418">
    <property type="term" value="P:tRNA aminoacylation for protein translation"/>
    <property type="evidence" value="ECO:0007669"/>
    <property type="project" value="InterPro"/>
</dbReference>
<dbReference type="CDD" id="cd00777">
    <property type="entry name" value="AspRS_core"/>
    <property type="match status" value="1"/>
</dbReference>
<dbReference type="CDD" id="cd04317">
    <property type="entry name" value="EcAspRS_like_N"/>
    <property type="match status" value="1"/>
</dbReference>
<dbReference type="FunFam" id="2.40.50.140:FF:000080">
    <property type="entry name" value="Aspartate--tRNA ligase"/>
    <property type="match status" value="1"/>
</dbReference>
<dbReference type="FunFam" id="3.30.1360.30:FF:000004">
    <property type="entry name" value="tRNA synthetase class II family protein"/>
    <property type="match status" value="1"/>
</dbReference>
<dbReference type="Gene3D" id="3.30.930.10">
    <property type="entry name" value="Bira Bifunctional Protein, Domain 2"/>
    <property type="match status" value="1"/>
</dbReference>
<dbReference type="Gene3D" id="3.30.1360.30">
    <property type="entry name" value="GAD-like domain"/>
    <property type="match status" value="1"/>
</dbReference>
<dbReference type="Gene3D" id="2.40.50.140">
    <property type="entry name" value="Nucleic acid-binding proteins"/>
    <property type="match status" value="1"/>
</dbReference>
<dbReference type="HAMAP" id="MF_00044">
    <property type="entry name" value="Asp_tRNA_synth_type1"/>
    <property type="match status" value="1"/>
</dbReference>
<dbReference type="InterPro" id="IPR004364">
    <property type="entry name" value="Aa-tRNA-synt_II"/>
</dbReference>
<dbReference type="InterPro" id="IPR006195">
    <property type="entry name" value="aa-tRNA-synth_II"/>
</dbReference>
<dbReference type="InterPro" id="IPR045864">
    <property type="entry name" value="aa-tRNA-synth_II/BPL/LPL"/>
</dbReference>
<dbReference type="InterPro" id="IPR004524">
    <property type="entry name" value="Asp-tRNA-ligase_1"/>
</dbReference>
<dbReference type="InterPro" id="IPR047089">
    <property type="entry name" value="Asp-tRNA-ligase_1_N"/>
</dbReference>
<dbReference type="InterPro" id="IPR002312">
    <property type="entry name" value="Asp/Asn-tRNA-synth_IIb"/>
</dbReference>
<dbReference type="InterPro" id="IPR047090">
    <property type="entry name" value="AspRS_core"/>
</dbReference>
<dbReference type="InterPro" id="IPR004115">
    <property type="entry name" value="GAD-like_sf"/>
</dbReference>
<dbReference type="InterPro" id="IPR029351">
    <property type="entry name" value="GAD_dom"/>
</dbReference>
<dbReference type="InterPro" id="IPR012340">
    <property type="entry name" value="NA-bd_OB-fold"/>
</dbReference>
<dbReference type="InterPro" id="IPR004365">
    <property type="entry name" value="NA-bd_OB_tRNA"/>
</dbReference>
<dbReference type="NCBIfam" id="TIGR00459">
    <property type="entry name" value="aspS_bact"/>
    <property type="match status" value="1"/>
</dbReference>
<dbReference type="NCBIfam" id="NF001750">
    <property type="entry name" value="PRK00476.1"/>
    <property type="match status" value="1"/>
</dbReference>
<dbReference type="PANTHER" id="PTHR22594:SF5">
    <property type="entry name" value="ASPARTATE--TRNA LIGASE, MITOCHONDRIAL"/>
    <property type="match status" value="1"/>
</dbReference>
<dbReference type="PANTHER" id="PTHR22594">
    <property type="entry name" value="ASPARTYL/LYSYL-TRNA SYNTHETASE"/>
    <property type="match status" value="1"/>
</dbReference>
<dbReference type="Pfam" id="PF02938">
    <property type="entry name" value="GAD"/>
    <property type="match status" value="1"/>
</dbReference>
<dbReference type="Pfam" id="PF00152">
    <property type="entry name" value="tRNA-synt_2"/>
    <property type="match status" value="1"/>
</dbReference>
<dbReference type="Pfam" id="PF01336">
    <property type="entry name" value="tRNA_anti-codon"/>
    <property type="match status" value="1"/>
</dbReference>
<dbReference type="PRINTS" id="PR01042">
    <property type="entry name" value="TRNASYNTHASP"/>
</dbReference>
<dbReference type="SUPFAM" id="SSF55681">
    <property type="entry name" value="Class II aaRS and biotin synthetases"/>
    <property type="match status" value="1"/>
</dbReference>
<dbReference type="SUPFAM" id="SSF55261">
    <property type="entry name" value="GAD domain-like"/>
    <property type="match status" value="1"/>
</dbReference>
<dbReference type="SUPFAM" id="SSF50249">
    <property type="entry name" value="Nucleic acid-binding proteins"/>
    <property type="match status" value="1"/>
</dbReference>
<dbReference type="PROSITE" id="PS50862">
    <property type="entry name" value="AA_TRNA_LIGASE_II"/>
    <property type="match status" value="1"/>
</dbReference>
<evidence type="ECO:0000250" key="1"/>
<evidence type="ECO:0000250" key="2">
    <source>
        <dbReference type="UniProtKB" id="P14868"/>
    </source>
</evidence>
<evidence type="ECO:0000255" key="3"/>
<evidence type="ECO:0000269" key="4">
    <source>
    </source>
</evidence>
<evidence type="ECO:0000305" key="5"/>
<evidence type="ECO:0000312" key="6">
    <source>
        <dbReference type="Araport" id="AT4G33760"/>
    </source>
</evidence>
<evidence type="ECO:0000312" key="7">
    <source>
        <dbReference type="EMBL" id="CAA20589.1"/>
    </source>
</evidence>
<name>SYDM_ARATH</name>
<reference key="1">
    <citation type="journal article" date="1999" name="Nature">
        <title>Sequence and analysis of chromosome 4 of the plant Arabidopsis thaliana.</title>
        <authorList>
            <person name="Mayer K.F.X."/>
            <person name="Schueller C."/>
            <person name="Wambutt R."/>
            <person name="Murphy G."/>
            <person name="Volckaert G."/>
            <person name="Pohl T."/>
            <person name="Duesterhoeft A."/>
            <person name="Stiekema W."/>
            <person name="Entian K.-D."/>
            <person name="Terryn N."/>
            <person name="Harris B."/>
            <person name="Ansorge W."/>
            <person name="Brandt P."/>
            <person name="Grivell L.A."/>
            <person name="Rieger M."/>
            <person name="Weichselgartner M."/>
            <person name="de Simone V."/>
            <person name="Obermaier B."/>
            <person name="Mache R."/>
            <person name="Mueller M."/>
            <person name="Kreis M."/>
            <person name="Delseny M."/>
            <person name="Puigdomenech P."/>
            <person name="Watson M."/>
            <person name="Schmidtheini T."/>
            <person name="Reichert B."/>
            <person name="Portetelle D."/>
            <person name="Perez-Alonso M."/>
            <person name="Boutry M."/>
            <person name="Bancroft I."/>
            <person name="Vos P."/>
            <person name="Hoheisel J."/>
            <person name="Zimmermann W."/>
            <person name="Wedler H."/>
            <person name="Ridley P."/>
            <person name="Langham S.-A."/>
            <person name="McCullagh B."/>
            <person name="Bilham L."/>
            <person name="Robben J."/>
            <person name="van der Schueren J."/>
            <person name="Grymonprez B."/>
            <person name="Chuang Y.-J."/>
            <person name="Vandenbussche F."/>
            <person name="Braeken M."/>
            <person name="Weltjens I."/>
            <person name="Voet M."/>
            <person name="Bastiaens I."/>
            <person name="Aert R."/>
            <person name="Defoor E."/>
            <person name="Weitzenegger T."/>
            <person name="Bothe G."/>
            <person name="Ramsperger U."/>
            <person name="Hilbert H."/>
            <person name="Braun M."/>
            <person name="Holzer E."/>
            <person name="Brandt A."/>
            <person name="Peters S."/>
            <person name="van Staveren M."/>
            <person name="Dirkse W."/>
            <person name="Mooijman P."/>
            <person name="Klein Lankhorst R."/>
            <person name="Rose M."/>
            <person name="Hauf J."/>
            <person name="Koetter P."/>
            <person name="Berneiser S."/>
            <person name="Hempel S."/>
            <person name="Feldpausch M."/>
            <person name="Lamberth S."/>
            <person name="Van den Daele H."/>
            <person name="De Keyser A."/>
            <person name="Buysshaert C."/>
            <person name="Gielen J."/>
            <person name="Villarroel R."/>
            <person name="De Clercq R."/>
            <person name="van Montagu M."/>
            <person name="Rogers J."/>
            <person name="Cronin A."/>
            <person name="Quail M.A."/>
            <person name="Bray-Allen S."/>
            <person name="Clark L."/>
            <person name="Doggett J."/>
            <person name="Hall S."/>
            <person name="Kay M."/>
            <person name="Lennard N."/>
            <person name="McLay K."/>
            <person name="Mayes R."/>
            <person name="Pettett A."/>
            <person name="Rajandream M.A."/>
            <person name="Lyne M."/>
            <person name="Benes V."/>
            <person name="Rechmann S."/>
            <person name="Borkova D."/>
            <person name="Bloecker H."/>
            <person name="Scharfe M."/>
            <person name="Grimm M."/>
            <person name="Loehnert T.-H."/>
            <person name="Dose S."/>
            <person name="de Haan M."/>
            <person name="Maarse A.C."/>
            <person name="Schaefer M."/>
            <person name="Mueller-Auer S."/>
            <person name="Gabel C."/>
            <person name="Fuchs M."/>
            <person name="Fartmann B."/>
            <person name="Granderath K."/>
            <person name="Dauner D."/>
            <person name="Herzl A."/>
            <person name="Neumann S."/>
            <person name="Argiriou A."/>
            <person name="Vitale D."/>
            <person name="Liguori R."/>
            <person name="Piravandi E."/>
            <person name="Massenet O."/>
            <person name="Quigley F."/>
            <person name="Clabauld G."/>
            <person name="Muendlein A."/>
            <person name="Felber R."/>
            <person name="Schnabl S."/>
            <person name="Hiller R."/>
            <person name="Schmidt W."/>
            <person name="Lecharny A."/>
            <person name="Aubourg S."/>
            <person name="Chefdor F."/>
            <person name="Cooke R."/>
            <person name="Berger C."/>
            <person name="Monfort A."/>
            <person name="Casacuberta E."/>
            <person name="Gibbons T."/>
            <person name="Weber N."/>
            <person name="Vandenbol M."/>
            <person name="Bargues M."/>
            <person name="Terol J."/>
            <person name="Torres A."/>
            <person name="Perez-Perez A."/>
            <person name="Purnelle B."/>
            <person name="Bent E."/>
            <person name="Johnson S."/>
            <person name="Tacon D."/>
            <person name="Jesse T."/>
            <person name="Heijnen L."/>
            <person name="Schwarz S."/>
            <person name="Scholler P."/>
            <person name="Heber S."/>
            <person name="Francs P."/>
            <person name="Bielke C."/>
            <person name="Frishman D."/>
            <person name="Haase D."/>
            <person name="Lemcke K."/>
            <person name="Mewes H.-W."/>
            <person name="Stocker S."/>
            <person name="Zaccaria P."/>
            <person name="Bevan M."/>
            <person name="Wilson R.K."/>
            <person name="de la Bastide M."/>
            <person name="Habermann K."/>
            <person name="Parnell L."/>
            <person name="Dedhia N."/>
            <person name="Gnoj L."/>
            <person name="Schutz K."/>
            <person name="Huang E."/>
            <person name="Spiegel L."/>
            <person name="Sekhon M."/>
            <person name="Murray J."/>
            <person name="Sheet P."/>
            <person name="Cordes M."/>
            <person name="Abu-Threideh J."/>
            <person name="Stoneking T."/>
            <person name="Kalicki J."/>
            <person name="Graves T."/>
            <person name="Harmon G."/>
            <person name="Edwards J."/>
            <person name="Latreille P."/>
            <person name="Courtney L."/>
            <person name="Cloud J."/>
            <person name="Abbott A."/>
            <person name="Scott K."/>
            <person name="Johnson D."/>
            <person name="Minx P."/>
            <person name="Bentley D."/>
            <person name="Fulton B."/>
            <person name="Miller N."/>
            <person name="Greco T."/>
            <person name="Kemp K."/>
            <person name="Kramer J."/>
            <person name="Fulton L."/>
            <person name="Mardis E."/>
            <person name="Dante M."/>
            <person name="Pepin K."/>
            <person name="Hillier L.W."/>
            <person name="Nelson J."/>
            <person name="Spieth J."/>
            <person name="Ryan E."/>
            <person name="Andrews S."/>
            <person name="Geisel C."/>
            <person name="Layman D."/>
            <person name="Du H."/>
            <person name="Ali J."/>
            <person name="Berghoff A."/>
            <person name="Jones K."/>
            <person name="Drone K."/>
            <person name="Cotton M."/>
            <person name="Joshu C."/>
            <person name="Antonoiu B."/>
            <person name="Zidanic M."/>
            <person name="Strong C."/>
            <person name="Sun H."/>
            <person name="Lamar B."/>
            <person name="Yordan C."/>
            <person name="Ma P."/>
            <person name="Zhong J."/>
            <person name="Preston R."/>
            <person name="Vil D."/>
            <person name="Shekher M."/>
            <person name="Matero A."/>
            <person name="Shah R."/>
            <person name="Swaby I.K."/>
            <person name="O'Shaughnessy A."/>
            <person name="Rodriguez M."/>
            <person name="Hoffman J."/>
            <person name="Till S."/>
            <person name="Granat S."/>
            <person name="Shohdy N."/>
            <person name="Hasegawa A."/>
            <person name="Hameed A."/>
            <person name="Lodhi M."/>
            <person name="Johnson A."/>
            <person name="Chen E."/>
            <person name="Marra M.A."/>
            <person name="Martienssen R."/>
            <person name="McCombie W.R."/>
        </authorList>
    </citation>
    <scope>NUCLEOTIDE SEQUENCE [LARGE SCALE GENOMIC DNA]</scope>
    <source>
        <strain>cv. Columbia</strain>
    </source>
</reference>
<reference key="2">
    <citation type="journal article" date="2017" name="Plant J.">
        <title>Araport11: a complete reannotation of the Arabidopsis thaliana reference genome.</title>
        <authorList>
            <person name="Cheng C.Y."/>
            <person name="Krishnakumar V."/>
            <person name="Chan A.P."/>
            <person name="Thibaud-Nissen F."/>
            <person name="Schobel S."/>
            <person name="Town C.D."/>
        </authorList>
    </citation>
    <scope>GENOME REANNOTATION</scope>
    <source>
        <strain>cv. Columbia</strain>
    </source>
</reference>
<reference key="3">
    <citation type="journal article" date="2002" name="Science">
        <title>Functional annotation of a full-length Arabidopsis cDNA collection.</title>
        <authorList>
            <person name="Seki M."/>
            <person name="Narusaka M."/>
            <person name="Kamiya A."/>
            <person name="Ishida J."/>
            <person name="Satou M."/>
            <person name="Sakurai T."/>
            <person name="Nakajima M."/>
            <person name="Enju A."/>
            <person name="Akiyama K."/>
            <person name="Oono Y."/>
            <person name="Muramatsu M."/>
            <person name="Hayashizaki Y."/>
            <person name="Kawai J."/>
            <person name="Carninci P."/>
            <person name="Itoh M."/>
            <person name="Ishii Y."/>
            <person name="Arakawa T."/>
            <person name="Shibata K."/>
            <person name="Shinagawa A."/>
            <person name="Shinozaki K."/>
        </authorList>
    </citation>
    <scope>NUCLEOTIDE SEQUENCE [LARGE SCALE MRNA]</scope>
    <source>
        <strain>cv. Columbia</strain>
    </source>
</reference>
<reference key="4">
    <citation type="journal article" date="2005" name="Proc. Natl. Acad. Sci. U.S.A.">
        <title>Dual targeting is the rule for organellar aminoacyl-tRNA synthetases in Arabidopsis thaliana.</title>
        <authorList>
            <person name="Duchene A.-M."/>
            <person name="Giritch A."/>
            <person name="Hoffmann B."/>
            <person name="Cognat V."/>
            <person name="Lancelin D."/>
            <person name="Peeters N.M."/>
            <person name="Zaepfel M."/>
            <person name="Marechal-Drouard L."/>
            <person name="Small I.D."/>
        </authorList>
    </citation>
    <scope>SUBCELLULAR LOCATION</scope>
</reference>
<accession>F4JJT9</accession>
<accession>O81892</accession>
<accession>Q8GWM7</accession>
<keyword id="KW-0030">Aminoacyl-tRNA synthetase</keyword>
<keyword id="KW-0067">ATP-binding</keyword>
<keyword id="KW-0150">Chloroplast</keyword>
<keyword id="KW-0238">DNA-binding</keyword>
<keyword id="KW-0436">Ligase</keyword>
<keyword id="KW-0460">Magnesium</keyword>
<keyword id="KW-0479">Metal-binding</keyword>
<keyword id="KW-0496">Mitochondrion</keyword>
<keyword id="KW-0547">Nucleotide-binding</keyword>
<keyword id="KW-0934">Plastid</keyword>
<keyword id="KW-0648">Protein biosynthesis</keyword>
<keyword id="KW-1185">Reference proteome</keyword>
<sequence>MSLLLRTLPLRPTRFLSATAISISNATNFFVVPKRTNPLPGTRRTFSSSPVAAASGDVVVKPVPSPPSVLRWVSRTELCGELSVNDVGKRVHLCGWVALHRVHGGLTFLNLRDHTGIVQVRTLPDEFPEAHGLINDMRLEYVVLVEGTVRSRPNESVNKKMKTGFVEVVAEHVEILNPVRTKLPFLVTTADENKDLIKEEIRLRFRCLDLRRQQMKNNIVLRHNVVKLIRRYLEDRHGFIEIETPILSRSTPEGARDYLVPSRIQSGTFYALPQSPQLFKQMLMVSGFDKYYQIARCFRDEDLRADRQPEFTQLDMEMAFMPMEDMLKLNEDLIRKVFSEIKGIQLPDPFPRLTYADAMDRYGSDRPDTRFDLELKDVSNVFTESSFRVFTEALESGGIIKVLCVPLGAKKYSNSALKKGDIYNEAMKSGAKGLPFLKVLDNGEIEGIAALVSSLDSAGKINFVKQCGAAPGDLILFGVGPVTSVNKTLDRLRLFVAHDMDLIDHSKHSILWVTDFPMFEWNEPEQRLEALHHPFTAPKPEDMDDLPSARALAYDMVYNGVEIGGGSLRIYKRDVQEKVLEIIGISPEEAESKFGYLLEALDMGAPPHGGIAYGLDRMVMMLGGASSIRDVIAFPKTTTAQCALTRTPSEVDPKQLQDLSIRTK</sequence>
<proteinExistence type="evidence at transcript level"/>
<protein>
    <recommendedName>
        <fullName evidence="5">Aspartate--tRNA ligase, chloroplastic/mitochondrial</fullName>
        <ecNumber evidence="5">6.1.1.12</ecNumber>
    </recommendedName>
    <alternativeName>
        <fullName evidence="5">Aspartyl-tRNA synthetase</fullName>
        <shortName evidence="5">AspRS</shortName>
    </alternativeName>
</protein>
<feature type="chain" id="PRO_0000433561" description="Aspartate--tRNA ligase, chloroplastic/mitochondrial">
    <location>
        <begin position="1"/>
        <end position="664"/>
    </location>
</feature>
<feature type="DNA-binding region" description="OB" evidence="3">
    <location>
        <begin position="91"/>
        <end position="176"/>
    </location>
</feature>
<feature type="region of interest" description="Aspartate" evidence="1">
    <location>
        <begin position="277"/>
        <end position="280"/>
    </location>
</feature>
<feature type="binding site" evidence="1">
    <location>
        <position position="253"/>
    </location>
    <ligand>
        <name>L-aspartate</name>
        <dbReference type="ChEBI" id="CHEBI:29991"/>
    </ligand>
</feature>
<feature type="binding site" evidence="1">
    <location>
        <begin position="299"/>
        <end position="301"/>
    </location>
    <ligand>
        <name>ATP</name>
        <dbReference type="ChEBI" id="CHEBI:30616"/>
    </ligand>
</feature>
<feature type="binding site" evidence="1">
    <location>
        <position position="299"/>
    </location>
    <ligand>
        <name>L-aspartate</name>
        <dbReference type="ChEBI" id="CHEBI:29991"/>
    </ligand>
</feature>
<feature type="binding site" evidence="1">
    <location>
        <position position="562"/>
    </location>
    <ligand>
        <name>ATP</name>
        <dbReference type="ChEBI" id="CHEBI:30616"/>
    </ligand>
</feature>
<feature type="binding site" evidence="1">
    <location>
        <position position="562"/>
    </location>
    <ligand>
        <name>Mg(2+)</name>
        <dbReference type="ChEBI" id="CHEBI:18420"/>
        <label>2</label>
    </ligand>
</feature>
<feature type="binding site" evidence="1">
    <location>
        <position position="562"/>
    </location>
    <ligand>
        <name>Mg(2+)</name>
        <dbReference type="ChEBI" id="CHEBI:18420"/>
        <label>3</label>
    </ligand>
</feature>
<feature type="binding site" evidence="1">
    <location>
        <position position="569"/>
    </location>
    <ligand>
        <name>L-aspartate</name>
        <dbReference type="ChEBI" id="CHEBI:29991"/>
    </ligand>
</feature>
<feature type="binding site" evidence="1">
    <location>
        <begin position="614"/>
        <end position="617"/>
    </location>
    <ligand>
        <name>ATP</name>
        <dbReference type="ChEBI" id="CHEBI:30616"/>
    </ligand>
</feature>
<feature type="sequence conflict" description="In Ref. 3; BAC43347." evidence="5" ref="3">
    <original>Q</original>
    <variation>R</variation>
    <location>
        <position position="214"/>
    </location>
</feature>
<gene>
    <name evidence="6" type="ordered locus">At4g33760</name>
    <name evidence="7" type="ORF">T16L1.250</name>
</gene>